<reference key="1">
    <citation type="submission" date="2003-10" db="EMBL/GenBank/DDBJ databases">
        <title>1G5z, a zebrafish homolog of rat 1G5 is expressed in the brain and sensory neurons.</title>
        <authorList>
            <person name="Lim H."/>
            <person name="Ro H."/>
            <person name="Won M."/>
            <person name="Rhee M."/>
        </authorList>
    </citation>
    <scope>NUCLEOTIDE SEQUENCE [MRNA]</scope>
    <source>
        <strain>AB</strain>
    </source>
</reference>
<reference key="2">
    <citation type="journal article" date="2013" name="Nature">
        <title>The zebrafish reference genome sequence and its relationship to the human genome.</title>
        <authorList>
            <person name="Howe K."/>
            <person name="Clark M.D."/>
            <person name="Torroja C.F."/>
            <person name="Torrance J."/>
            <person name="Berthelot C."/>
            <person name="Muffato M."/>
            <person name="Collins J.E."/>
            <person name="Humphray S."/>
            <person name="McLaren K."/>
            <person name="Matthews L."/>
            <person name="McLaren S."/>
            <person name="Sealy I."/>
            <person name="Caccamo M."/>
            <person name="Churcher C."/>
            <person name="Scott C."/>
            <person name="Barrett J.C."/>
            <person name="Koch R."/>
            <person name="Rauch G.J."/>
            <person name="White S."/>
            <person name="Chow W."/>
            <person name="Kilian B."/>
            <person name="Quintais L.T."/>
            <person name="Guerra-Assuncao J.A."/>
            <person name="Zhou Y."/>
            <person name="Gu Y."/>
            <person name="Yen J."/>
            <person name="Vogel J.H."/>
            <person name="Eyre T."/>
            <person name="Redmond S."/>
            <person name="Banerjee R."/>
            <person name="Chi J."/>
            <person name="Fu B."/>
            <person name="Langley E."/>
            <person name="Maguire S.F."/>
            <person name="Laird G.K."/>
            <person name="Lloyd D."/>
            <person name="Kenyon E."/>
            <person name="Donaldson S."/>
            <person name="Sehra H."/>
            <person name="Almeida-King J."/>
            <person name="Loveland J."/>
            <person name="Trevanion S."/>
            <person name="Jones M."/>
            <person name="Quail M."/>
            <person name="Willey D."/>
            <person name="Hunt A."/>
            <person name="Burton J."/>
            <person name="Sims S."/>
            <person name="McLay K."/>
            <person name="Plumb B."/>
            <person name="Davis J."/>
            <person name="Clee C."/>
            <person name="Oliver K."/>
            <person name="Clark R."/>
            <person name="Riddle C."/>
            <person name="Elliot D."/>
            <person name="Threadgold G."/>
            <person name="Harden G."/>
            <person name="Ware D."/>
            <person name="Begum S."/>
            <person name="Mortimore B."/>
            <person name="Kerry G."/>
            <person name="Heath P."/>
            <person name="Phillimore B."/>
            <person name="Tracey A."/>
            <person name="Corby N."/>
            <person name="Dunn M."/>
            <person name="Johnson C."/>
            <person name="Wood J."/>
            <person name="Clark S."/>
            <person name="Pelan S."/>
            <person name="Griffiths G."/>
            <person name="Smith M."/>
            <person name="Glithero R."/>
            <person name="Howden P."/>
            <person name="Barker N."/>
            <person name="Lloyd C."/>
            <person name="Stevens C."/>
            <person name="Harley J."/>
            <person name="Holt K."/>
            <person name="Panagiotidis G."/>
            <person name="Lovell J."/>
            <person name="Beasley H."/>
            <person name="Henderson C."/>
            <person name="Gordon D."/>
            <person name="Auger K."/>
            <person name="Wright D."/>
            <person name="Collins J."/>
            <person name="Raisen C."/>
            <person name="Dyer L."/>
            <person name="Leung K."/>
            <person name="Robertson L."/>
            <person name="Ambridge K."/>
            <person name="Leongamornlert D."/>
            <person name="McGuire S."/>
            <person name="Gilderthorp R."/>
            <person name="Griffiths C."/>
            <person name="Manthravadi D."/>
            <person name="Nichol S."/>
            <person name="Barker G."/>
            <person name="Whitehead S."/>
            <person name="Kay M."/>
            <person name="Brown J."/>
            <person name="Murnane C."/>
            <person name="Gray E."/>
            <person name="Humphries M."/>
            <person name="Sycamore N."/>
            <person name="Barker D."/>
            <person name="Saunders D."/>
            <person name="Wallis J."/>
            <person name="Babbage A."/>
            <person name="Hammond S."/>
            <person name="Mashreghi-Mohammadi M."/>
            <person name="Barr L."/>
            <person name="Martin S."/>
            <person name="Wray P."/>
            <person name="Ellington A."/>
            <person name="Matthews N."/>
            <person name="Ellwood M."/>
            <person name="Woodmansey R."/>
            <person name="Clark G."/>
            <person name="Cooper J."/>
            <person name="Tromans A."/>
            <person name="Grafham D."/>
            <person name="Skuce C."/>
            <person name="Pandian R."/>
            <person name="Andrews R."/>
            <person name="Harrison E."/>
            <person name="Kimberley A."/>
            <person name="Garnett J."/>
            <person name="Fosker N."/>
            <person name="Hall R."/>
            <person name="Garner P."/>
            <person name="Kelly D."/>
            <person name="Bird C."/>
            <person name="Palmer S."/>
            <person name="Gehring I."/>
            <person name="Berger A."/>
            <person name="Dooley C.M."/>
            <person name="Ersan-Urun Z."/>
            <person name="Eser C."/>
            <person name="Geiger H."/>
            <person name="Geisler M."/>
            <person name="Karotki L."/>
            <person name="Kirn A."/>
            <person name="Konantz J."/>
            <person name="Konantz M."/>
            <person name="Oberlander M."/>
            <person name="Rudolph-Geiger S."/>
            <person name="Teucke M."/>
            <person name="Lanz C."/>
            <person name="Raddatz G."/>
            <person name="Osoegawa K."/>
            <person name="Zhu B."/>
            <person name="Rapp A."/>
            <person name="Widaa S."/>
            <person name="Langford C."/>
            <person name="Yang F."/>
            <person name="Schuster S.C."/>
            <person name="Carter N.P."/>
            <person name="Harrow J."/>
            <person name="Ning Z."/>
            <person name="Herrero J."/>
            <person name="Searle S.M."/>
            <person name="Enright A."/>
            <person name="Geisler R."/>
            <person name="Plasterk R.H."/>
            <person name="Lee C."/>
            <person name="Westerfield M."/>
            <person name="de Jong P.J."/>
            <person name="Zon L.I."/>
            <person name="Postlethwait J.H."/>
            <person name="Nusslein-Volhard C."/>
            <person name="Hubbard T.J."/>
            <person name="Roest Crollius H."/>
            <person name="Rogers J."/>
            <person name="Stemple D.L."/>
        </authorList>
    </citation>
    <scope>NUCLEOTIDE SEQUENCE [LARGE SCALE GENOMIC DNA]</scope>
    <source>
        <strain>Tuebingen</strain>
    </source>
</reference>
<reference key="3">
    <citation type="submission" date="2003-07" db="EMBL/GenBank/DDBJ databases">
        <authorList>
            <consortium name="NIH - Zebrafish Gene Collection (ZGC) project"/>
        </authorList>
    </citation>
    <scope>NUCLEOTIDE SEQUENCE [LARGE SCALE MRNA]</scope>
    <source>
        <strain>AB</strain>
    </source>
</reference>
<feature type="chain" id="PRO_0000250097" description="CaM kinase-like vesicle-associated protein">
    <location>
        <begin position="1"/>
        <end position="436"/>
    </location>
</feature>
<feature type="domain" description="Protein kinase" evidence="2">
    <location>
        <begin position="24"/>
        <end position="286"/>
    </location>
</feature>
<feature type="region of interest" description="Disordered" evidence="3">
    <location>
        <begin position="328"/>
        <end position="436"/>
    </location>
</feature>
<feature type="compositionally biased region" description="Low complexity" evidence="3">
    <location>
        <begin position="333"/>
        <end position="409"/>
    </location>
</feature>
<feature type="sequence conflict" description="In Ref. 1; AAR20249." evidence="4" ref="1">
    <original>M</original>
    <variation>V</variation>
    <location>
        <position position="76"/>
    </location>
</feature>
<feature type="sequence conflict" description="In Ref. 1; AAR20249." evidence="4" ref="1">
    <original>E</original>
    <variation>G</variation>
    <location>
        <position position="268"/>
    </location>
</feature>
<feature type="sequence conflict" description="In Ref. 1; AAR20249." evidence="4" ref="1">
    <original>L</original>
    <variation>H</variation>
    <location>
        <position position="326"/>
    </location>
</feature>
<feature type="sequence conflict" description="In Ref. 3; AAH55127." evidence="4" ref="3">
    <original>S</original>
    <variation>P</variation>
    <location>
        <position position="426"/>
    </location>
</feature>
<gene>
    <name type="primary">camkv</name>
    <name type="ORF">zgc:63506</name>
</gene>
<comment type="function">
    <text>Does not appear to have detectable kinase activity.</text>
</comment>
<comment type="cofactor">
    <cofactor evidence="1">
        <name>Ca(2+)</name>
        <dbReference type="ChEBI" id="CHEBI:29108"/>
    </cofactor>
</comment>
<comment type="subunit">
    <text evidence="1">Interacts with calmodulin, in the presence of calcium.</text>
</comment>
<comment type="subcellular location">
    <subcellularLocation>
        <location>Cytoplasmic vesicle membrane</location>
        <topology>Peripheral membrane protein</topology>
    </subcellularLocation>
    <text evidence="1">May be associated with vesicular structures.</text>
</comment>
<comment type="domain">
    <text>The protein kinase domain is predicted to be catalytically inactive.</text>
</comment>
<comment type="similarity">
    <text evidence="4">Belongs to the protein kinase superfamily. CAMK Ser/Thr protein kinase family.</text>
</comment>
<keyword id="KW-0112">Calmodulin-binding</keyword>
<keyword id="KW-0968">Cytoplasmic vesicle</keyword>
<keyword id="KW-0472">Membrane</keyword>
<keyword id="KW-1185">Reference proteome</keyword>
<organism>
    <name type="scientific">Danio rerio</name>
    <name type="common">Zebrafish</name>
    <name type="synonym">Brachydanio rerio</name>
    <dbReference type="NCBI Taxonomy" id="7955"/>
    <lineage>
        <taxon>Eukaryota</taxon>
        <taxon>Metazoa</taxon>
        <taxon>Chordata</taxon>
        <taxon>Craniata</taxon>
        <taxon>Vertebrata</taxon>
        <taxon>Euteleostomi</taxon>
        <taxon>Actinopterygii</taxon>
        <taxon>Neopterygii</taxon>
        <taxon>Teleostei</taxon>
        <taxon>Ostariophysi</taxon>
        <taxon>Cypriniformes</taxon>
        <taxon>Danionidae</taxon>
        <taxon>Danioninae</taxon>
        <taxon>Danio</taxon>
    </lineage>
</organism>
<name>CAMKV_DANRE</name>
<evidence type="ECO:0000250" key="1"/>
<evidence type="ECO:0000255" key="2">
    <source>
        <dbReference type="PROSITE-ProRule" id="PRU00159"/>
    </source>
</evidence>
<evidence type="ECO:0000256" key="3">
    <source>
        <dbReference type="SAM" id="MobiDB-lite"/>
    </source>
</evidence>
<evidence type="ECO:0000305" key="4"/>
<accession>Q7SY49</accession>
<accession>Q1LXP6</accession>
<accession>Q6STH4</accession>
<proteinExistence type="evidence at transcript level"/>
<dbReference type="EMBL" id="AY450361">
    <property type="protein sequence ID" value="AAR20249.1"/>
    <property type="molecule type" value="mRNA"/>
</dbReference>
<dbReference type="EMBL" id="BX296566">
    <property type="protein sequence ID" value="CAK04329.1"/>
    <property type="molecule type" value="Genomic_DNA"/>
</dbReference>
<dbReference type="EMBL" id="BC055127">
    <property type="protein sequence ID" value="AAH55127.1"/>
    <property type="molecule type" value="mRNA"/>
</dbReference>
<dbReference type="RefSeq" id="NP_956744.1">
    <property type="nucleotide sequence ID" value="NM_200450.1"/>
</dbReference>
<dbReference type="SMR" id="Q7SY49"/>
<dbReference type="FunCoup" id="Q7SY49">
    <property type="interactions" value="246"/>
</dbReference>
<dbReference type="STRING" id="7955.ENSDARP00000108125"/>
<dbReference type="PaxDb" id="7955-ENSDARP00000108125"/>
<dbReference type="Ensembl" id="ENSDART00000125766">
    <property type="protein sequence ID" value="ENSDARP00000108125"/>
    <property type="gene ID" value="ENSDARG00000005141"/>
</dbReference>
<dbReference type="Ensembl" id="ENSDART00000188113">
    <property type="protein sequence ID" value="ENSDARP00000155987"/>
    <property type="gene ID" value="ENSDARG00000117013"/>
</dbReference>
<dbReference type="GeneID" id="393422"/>
<dbReference type="KEGG" id="dre:393422"/>
<dbReference type="AGR" id="ZFIN:ZDB-GENE-040426-1140"/>
<dbReference type="CTD" id="393422"/>
<dbReference type="ZFIN" id="ZDB-GENE-040426-1140">
    <property type="gene designation" value="camkvb"/>
</dbReference>
<dbReference type="eggNOG" id="KOG0032">
    <property type="taxonomic scope" value="Eukaryota"/>
</dbReference>
<dbReference type="HOGENOM" id="CLU_000288_63_0_1"/>
<dbReference type="InParanoid" id="Q7SY49"/>
<dbReference type="OMA" id="NSATEAW"/>
<dbReference type="OrthoDB" id="40902at2759"/>
<dbReference type="PhylomeDB" id="Q7SY49"/>
<dbReference type="TreeFam" id="TF314166"/>
<dbReference type="PRO" id="PR:Q7SY49"/>
<dbReference type="Proteomes" id="UP000000437">
    <property type="component" value="Alternate scaffold 11"/>
</dbReference>
<dbReference type="Proteomes" id="UP000000437">
    <property type="component" value="Chromosome 11"/>
</dbReference>
<dbReference type="Bgee" id="ENSDARG00000005141">
    <property type="expression patterns" value="Expressed in brain and 4 other cell types or tissues"/>
</dbReference>
<dbReference type="GO" id="GO:0005737">
    <property type="term" value="C:cytoplasm"/>
    <property type="evidence" value="ECO:0000318"/>
    <property type="project" value="GO_Central"/>
</dbReference>
<dbReference type="GO" id="GO:0030659">
    <property type="term" value="C:cytoplasmic vesicle membrane"/>
    <property type="evidence" value="ECO:0007669"/>
    <property type="project" value="UniProtKB-SubCell"/>
</dbReference>
<dbReference type="GO" id="GO:0045202">
    <property type="term" value="C:synapse"/>
    <property type="evidence" value="ECO:0000318"/>
    <property type="project" value="GO_Central"/>
</dbReference>
<dbReference type="GO" id="GO:0005524">
    <property type="term" value="F:ATP binding"/>
    <property type="evidence" value="ECO:0007669"/>
    <property type="project" value="InterPro"/>
</dbReference>
<dbReference type="GO" id="GO:0004683">
    <property type="term" value="F:calcium/calmodulin-dependent protein kinase activity"/>
    <property type="evidence" value="ECO:0000318"/>
    <property type="project" value="GO_Central"/>
</dbReference>
<dbReference type="GO" id="GO:0005516">
    <property type="term" value="F:calmodulin binding"/>
    <property type="evidence" value="ECO:0000318"/>
    <property type="project" value="GO_Central"/>
</dbReference>
<dbReference type="GO" id="GO:0007165">
    <property type="term" value="P:signal transduction"/>
    <property type="evidence" value="ECO:0000318"/>
    <property type="project" value="GO_Central"/>
</dbReference>
<dbReference type="CDD" id="cd14088">
    <property type="entry name" value="STKc_CaMK_like"/>
    <property type="match status" value="1"/>
</dbReference>
<dbReference type="FunFam" id="1.10.510.10:FF:000188">
    <property type="entry name" value="CaM kinase-like vesicle-associated, like"/>
    <property type="match status" value="1"/>
</dbReference>
<dbReference type="FunFam" id="3.30.200.20:FF:000155">
    <property type="entry name" value="CaM kinase-like vesicle-associated, like"/>
    <property type="match status" value="1"/>
</dbReference>
<dbReference type="Gene3D" id="3.30.200.20">
    <property type="entry name" value="Phosphorylase Kinase, domain 1"/>
    <property type="match status" value="1"/>
</dbReference>
<dbReference type="Gene3D" id="1.10.510.10">
    <property type="entry name" value="Transferase(Phosphotransferase) domain 1"/>
    <property type="match status" value="1"/>
</dbReference>
<dbReference type="InterPro" id="IPR011009">
    <property type="entry name" value="Kinase-like_dom_sf"/>
</dbReference>
<dbReference type="InterPro" id="IPR000719">
    <property type="entry name" value="Prot_kinase_dom"/>
</dbReference>
<dbReference type="PANTHER" id="PTHR24347">
    <property type="entry name" value="SERINE/THREONINE-PROTEIN KINASE"/>
    <property type="match status" value="1"/>
</dbReference>
<dbReference type="Pfam" id="PF00069">
    <property type="entry name" value="Pkinase"/>
    <property type="match status" value="1"/>
</dbReference>
<dbReference type="SUPFAM" id="SSF56112">
    <property type="entry name" value="Protein kinase-like (PK-like)"/>
    <property type="match status" value="1"/>
</dbReference>
<dbReference type="PROSITE" id="PS50011">
    <property type="entry name" value="PROTEIN_KINASE_DOM"/>
    <property type="match status" value="1"/>
</dbReference>
<protein>
    <recommendedName>
        <fullName>CaM kinase-like vesicle-associated protein</fullName>
    </recommendedName>
    <alternativeName>
        <fullName>1G5z</fullName>
    </alternativeName>
</protein>
<sequence>MPFGCLKPGEKKDYNSPTEITDKYDLGQIVKSEEFCEIFRAKDKNTLKMYTCKKFLKKDGRKVRKAAKNEIVILKMVKHPNILQLVDVYETRKEYYLFLELATGREVFDWILDQGYYSERDTSNVIRQVMEAVAYLHSLKIVHRNLKLENLVYYNRLKHSKIVISDFHLAKLENGLIKEPCGTPEYLAPEVVGRQRYGRPVDCWALGVIMYILLSGNPPFYDEADDDDYENHDKNLFRKILAGDYEFDSPYWDEISDSAKNLVSRLMEVDQDQRLTAQEAINHEWISGNAASDKNIKENVCAQIEKNFAKAKWKKAVRVTTMMKRLRAPENQTAAATAPAAEAAAASPSEADPAAGAQETPQAASEASTAPSSTAESLSASIEVPAVEPANAEAASAAVQPPAEPVVHVPEPEQPVPTSRCNGEASALDTVEEQSG</sequence>